<evidence type="ECO:0000255" key="1">
    <source>
        <dbReference type="PROSITE-ProRule" id="PRU00779"/>
    </source>
</evidence>
<evidence type="ECO:0000269" key="2">
    <source>
    </source>
</evidence>
<evidence type="ECO:0000305" key="3"/>
<evidence type="ECO:0007829" key="4">
    <source>
        <dbReference type="PDB" id="1PCP"/>
    </source>
</evidence>
<evidence type="ECO:0007829" key="5">
    <source>
        <dbReference type="PDB" id="2PSP"/>
    </source>
</evidence>
<name>TFF2_PIG</name>
<protein>
    <recommendedName>
        <fullName>Trefoil factor 2</fullName>
    </recommendedName>
    <alternativeName>
        <fullName>Pancreatic spasmolytic polypeptide</fullName>
        <shortName>PSP</shortName>
    </alternativeName>
    <alternativeName>
        <fullName>Spasmolytic polypeptide</fullName>
        <shortName>SP</shortName>
    </alternativeName>
</protein>
<proteinExistence type="evidence at protein level"/>
<dbReference type="EMBL" id="X51696">
    <property type="protein sequence ID" value="CAA35993.1"/>
    <property type="molecule type" value="mRNA"/>
</dbReference>
<dbReference type="PIR" id="S12373">
    <property type="entry name" value="JOPGP"/>
</dbReference>
<dbReference type="PDB" id="1PCP">
    <property type="method" value="NMR"/>
    <property type="chains" value="A=23-127"/>
</dbReference>
<dbReference type="PDB" id="1POS">
    <property type="method" value="X-ray"/>
    <property type="resolution" value="2.60 A"/>
    <property type="chains" value="A/B=23-127"/>
</dbReference>
<dbReference type="PDB" id="1PSP">
    <property type="method" value="X-ray"/>
    <property type="resolution" value="2.50 A"/>
    <property type="chains" value="A/B=23-127"/>
</dbReference>
<dbReference type="PDB" id="2PSP">
    <property type="method" value="X-ray"/>
    <property type="resolution" value="1.95 A"/>
    <property type="chains" value="A/B=23-127"/>
</dbReference>
<dbReference type="PDBsum" id="1PCP"/>
<dbReference type="PDBsum" id="1POS"/>
<dbReference type="PDBsum" id="1PSP"/>
<dbReference type="PDBsum" id="2PSP"/>
<dbReference type="BMRB" id="P01359"/>
<dbReference type="SMR" id="P01359"/>
<dbReference type="FunCoup" id="P01359">
    <property type="interactions" value="45"/>
</dbReference>
<dbReference type="STRING" id="9823.ENSSSCP00000025323"/>
<dbReference type="PaxDb" id="9823-ENSSSCP00000025323"/>
<dbReference type="eggNOG" id="ENOG502S5ZY">
    <property type="taxonomic scope" value="Eukaryota"/>
</dbReference>
<dbReference type="InParanoid" id="P01359"/>
<dbReference type="EvolutionaryTrace" id="P01359"/>
<dbReference type="Proteomes" id="UP000008227">
    <property type="component" value="Unplaced"/>
</dbReference>
<dbReference type="Proteomes" id="UP000314985">
    <property type="component" value="Unplaced"/>
</dbReference>
<dbReference type="Proteomes" id="UP000694570">
    <property type="component" value="Unplaced"/>
</dbReference>
<dbReference type="Proteomes" id="UP000694571">
    <property type="component" value="Unplaced"/>
</dbReference>
<dbReference type="Proteomes" id="UP000694720">
    <property type="component" value="Unplaced"/>
</dbReference>
<dbReference type="Proteomes" id="UP000694722">
    <property type="component" value="Unplaced"/>
</dbReference>
<dbReference type="Proteomes" id="UP000694723">
    <property type="component" value="Unplaced"/>
</dbReference>
<dbReference type="Proteomes" id="UP000694724">
    <property type="component" value="Unplaced"/>
</dbReference>
<dbReference type="Proteomes" id="UP000694725">
    <property type="component" value="Unplaced"/>
</dbReference>
<dbReference type="Proteomes" id="UP000694726">
    <property type="component" value="Unplaced"/>
</dbReference>
<dbReference type="Proteomes" id="UP000694727">
    <property type="component" value="Unplaced"/>
</dbReference>
<dbReference type="Proteomes" id="UP000694728">
    <property type="component" value="Unplaced"/>
</dbReference>
<dbReference type="GO" id="GO:0005615">
    <property type="term" value="C:extracellular space"/>
    <property type="evidence" value="ECO:0000318"/>
    <property type="project" value="GO_Central"/>
</dbReference>
<dbReference type="GO" id="GO:0031723">
    <property type="term" value="F:CXCR4 chemokine receptor binding"/>
    <property type="evidence" value="ECO:0000318"/>
    <property type="project" value="GO_Central"/>
</dbReference>
<dbReference type="GO" id="GO:0008083">
    <property type="term" value="F:growth factor activity"/>
    <property type="evidence" value="ECO:0007669"/>
    <property type="project" value="UniProtKB-KW"/>
</dbReference>
<dbReference type="GO" id="GO:0070098">
    <property type="term" value="P:chemokine-mediated signaling pathway"/>
    <property type="evidence" value="ECO:0000318"/>
    <property type="project" value="GO_Central"/>
</dbReference>
<dbReference type="GO" id="GO:0030277">
    <property type="term" value="P:maintenance of gastrointestinal epithelium"/>
    <property type="evidence" value="ECO:0000318"/>
    <property type="project" value="GO_Central"/>
</dbReference>
<dbReference type="GO" id="GO:0060455">
    <property type="term" value="P:negative regulation of gastric acid secretion"/>
    <property type="evidence" value="ECO:0000318"/>
    <property type="project" value="GO_Central"/>
</dbReference>
<dbReference type="CDD" id="cd00111">
    <property type="entry name" value="Trefoil"/>
    <property type="match status" value="2"/>
</dbReference>
<dbReference type="FunFam" id="4.10.110.10:FF:000005">
    <property type="entry name" value="Trefoil factor 2"/>
    <property type="match status" value="1"/>
</dbReference>
<dbReference type="FunFam" id="4.10.110.10:FF:000001">
    <property type="entry name" value="Trefoil factor 3"/>
    <property type="match status" value="1"/>
</dbReference>
<dbReference type="Gene3D" id="4.10.110.10">
    <property type="entry name" value="Spasmolytic Protein, domain 1"/>
    <property type="match status" value="2"/>
</dbReference>
<dbReference type="InterPro" id="IPR017994">
    <property type="entry name" value="P_trefoil_chordata"/>
</dbReference>
<dbReference type="InterPro" id="IPR017957">
    <property type="entry name" value="P_trefoil_CS"/>
</dbReference>
<dbReference type="InterPro" id="IPR000519">
    <property type="entry name" value="P_trefoil_dom"/>
</dbReference>
<dbReference type="InterPro" id="IPR044913">
    <property type="entry name" value="P_trefoil_dom_sf"/>
</dbReference>
<dbReference type="PANTHER" id="PTHR13826">
    <property type="entry name" value="INTESTINAL TREFOIL FACTOR-RELATED"/>
    <property type="match status" value="1"/>
</dbReference>
<dbReference type="PANTHER" id="PTHR13826:SF17">
    <property type="entry name" value="TREFOIL FACTOR 2"/>
    <property type="match status" value="1"/>
</dbReference>
<dbReference type="Pfam" id="PF00088">
    <property type="entry name" value="Trefoil"/>
    <property type="match status" value="2"/>
</dbReference>
<dbReference type="PRINTS" id="PR00680">
    <property type="entry name" value="PTREFOIL"/>
</dbReference>
<dbReference type="SMART" id="SM00018">
    <property type="entry name" value="PD"/>
    <property type="match status" value="2"/>
</dbReference>
<dbReference type="SUPFAM" id="SSF57492">
    <property type="entry name" value="Trefoil"/>
    <property type="match status" value="2"/>
</dbReference>
<dbReference type="PROSITE" id="PS00025">
    <property type="entry name" value="P_TREFOIL_1"/>
    <property type="match status" value="2"/>
</dbReference>
<dbReference type="PROSITE" id="PS51448">
    <property type="entry name" value="P_TREFOIL_2"/>
    <property type="match status" value="2"/>
</dbReference>
<sequence length="127" mass="13834">EPQRPAPGHPPPAGAVCLTGAQKPAACRCSRQDPKNRVNCGFPGITSDQCFTSGCCFDSQVPGVPWCFKPLPAQESEECVMEVSARKNCGYPGISPEDCARRNCCFSDTIPEVPWCFFPMSVEDCHY</sequence>
<keyword id="KW-0002">3D-structure</keyword>
<keyword id="KW-0903">Direct protein sequencing</keyword>
<keyword id="KW-1015">Disulfide bond</keyword>
<keyword id="KW-0339">Growth factor</keyword>
<keyword id="KW-0873">Pyrrolidone carboxylic acid</keyword>
<keyword id="KW-1185">Reference proteome</keyword>
<keyword id="KW-0677">Repeat</keyword>
<keyword id="KW-0964">Secreted</keyword>
<keyword id="KW-0732">Signal</keyword>
<organism>
    <name type="scientific">Sus scrofa</name>
    <name type="common">Pig</name>
    <dbReference type="NCBI Taxonomy" id="9823"/>
    <lineage>
        <taxon>Eukaryota</taxon>
        <taxon>Metazoa</taxon>
        <taxon>Chordata</taxon>
        <taxon>Craniata</taxon>
        <taxon>Vertebrata</taxon>
        <taxon>Euteleostomi</taxon>
        <taxon>Mammalia</taxon>
        <taxon>Eutheria</taxon>
        <taxon>Laurasiatheria</taxon>
        <taxon>Artiodactyla</taxon>
        <taxon>Suina</taxon>
        <taxon>Suidae</taxon>
        <taxon>Sus</taxon>
    </lineage>
</organism>
<comment type="function">
    <text>Inhibits gastrointestinal motility and gastric acid secretion. Could function as a structural component of gastric mucus, possibly by stabilizing glycoproteins in the mucus gel through interactions with carbohydrate side chains.</text>
</comment>
<comment type="subcellular location">
    <subcellularLocation>
        <location>Secreted</location>
    </subcellularLocation>
</comment>
<comment type="tissue specificity">
    <text>Found in pancreas.</text>
</comment>
<feature type="signal peptide" evidence="2">
    <location>
        <begin position="1" status="less than"/>
        <end position="21"/>
    </location>
</feature>
<feature type="chain" id="PRO_0000023462" description="Trefoil factor 2">
    <location>
        <begin position="22"/>
        <end position="127"/>
    </location>
</feature>
<feature type="domain" description="P-type 1" evidence="1">
    <location>
        <begin position="27"/>
        <end position="71"/>
    </location>
</feature>
<feature type="domain" description="P-type 2" evidence="1">
    <location>
        <begin position="77"/>
        <end position="120"/>
    </location>
</feature>
<feature type="modified residue" description="Pyrrolidone carboxylic acid" evidence="2">
    <location>
        <position position="22"/>
    </location>
</feature>
<feature type="disulfide bond">
    <location>
        <begin position="27"/>
        <end position="125"/>
    </location>
</feature>
<feature type="disulfide bond">
    <location>
        <begin position="29"/>
        <end position="56"/>
    </location>
</feature>
<feature type="disulfide bond">
    <location>
        <begin position="40"/>
        <end position="55"/>
    </location>
</feature>
<feature type="disulfide bond">
    <location>
        <begin position="50"/>
        <end position="67"/>
    </location>
</feature>
<feature type="disulfide bond">
    <location>
        <begin position="79"/>
        <end position="105"/>
    </location>
</feature>
<feature type="disulfide bond">
    <location>
        <begin position="89"/>
        <end position="104"/>
    </location>
</feature>
<feature type="disulfide bond">
    <location>
        <begin position="99"/>
        <end position="116"/>
    </location>
</feature>
<feature type="sequence conflict" description="In Ref. 2; AA sequence." evidence="3" ref="2">
    <original>E</original>
    <variation>Q</variation>
    <location>
        <position position="82"/>
    </location>
</feature>
<feature type="sequence conflict" description="In Ref. 2; AA sequence." evidence="3" ref="2">
    <original>R</original>
    <variation>A</variation>
    <location>
        <position position="101"/>
    </location>
</feature>
<feature type="non-terminal residue">
    <location>
        <position position="1"/>
    </location>
</feature>
<feature type="helix" evidence="5">
    <location>
        <begin position="26"/>
        <end position="30"/>
    </location>
</feature>
<feature type="helix" evidence="5">
    <location>
        <begin position="34"/>
        <end position="36"/>
    </location>
</feature>
<feature type="helix" evidence="5">
    <location>
        <begin position="47"/>
        <end position="52"/>
    </location>
</feature>
<feature type="strand" evidence="4">
    <location>
        <begin position="61"/>
        <end position="64"/>
    </location>
</feature>
<feature type="strand" evidence="5">
    <location>
        <begin position="66"/>
        <end position="68"/>
    </location>
</feature>
<feature type="strand" evidence="4">
    <location>
        <begin position="74"/>
        <end position="76"/>
    </location>
</feature>
<feature type="helix" evidence="5">
    <location>
        <begin position="77"/>
        <end position="79"/>
    </location>
</feature>
<feature type="helix" evidence="5">
    <location>
        <begin position="83"/>
        <end position="85"/>
    </location>
</feature>
<feature type="helix" evidence="5">
    <location>
        <begin position="96"/>
        <end position="101"/>
    </location>
</feature>
<feature type="strand" evidence="4">
    <location>
        <begin position="110"/>
        <end position="113"/>
    </location>
</feature>
<feature type="strand" evidence="5">
    <location>
        <begin position="115"/>
        <end position="117"/>
    </location>
</feature>
<feature type="helix" evidence="5">
    <location>
        <begin position="122"/>
        <end position="124"/>
    </location>
</feature>
<reference key="1">
    <citation type="journal article" date="1990" name="EMBO J.">
        <title>hSP, the domain-duplicated homolog of pS2 protein, is co-expressed with pS2 in stomach but not in breast carcinoma.</title>
        <authorList>
            <person name="Tomasetto C."/>
            <person name="Rio M.C."/>
            <person name="Gautier C."/>
            <person name="Wolf C."/>
            <person name="Hareuveni M."/>
            <person name="Chambon P."/>
            <person name="Lathe R."/>
        </authorList>
    </citation>
    <scope>NUCLEOTIDE SEQUENCE [MRNA]</scope>
</reference>
<reference key="2">
    <citation type="journal article" date="1985" name="Biochim. Biophys. Acta">
        <title>The amino acid sequence of pancreatic spasmolytic polypeptide.</title>
        <authorList>
            <person name="Thim L."/>
            <person name="Thomsen J."/>
            <person name="Christensen M."/>
            <person name="Joergensen K.H."/>
        </authorList>
    </citation>
    <scope>PROTEIN SEQUENCE OF 22-127</scope>
    <scope>PYROGLUTAMATE FORMATION AT GLN-22</scope>
</reference>
<reference key="3">
    <citation type="journal article" date="1989" name="Biochim. Biophys. Acta">
        <title>Revised amino acid sequence of pancreatic spasmolytic polypeptide exhibits greater similarity with an inducible pS2 peptide found in a human breast cancer cell line.</title>
        <authorList>
            <person name="Rose K."/>
            <person name="Savoy L.-A."/>
            <person name="Thim L."/>
            <person name="Christensen M."/>
            <person name="Joergensen K.H."/>
        </authorList>
    </citation>
    <scope>SEQUENCE REVISION TO 69; 84; 89 AND 95</scope>
</reference>
<reference key="4">
    <citation type="journal article" date="1994" name="Proc. Natl. Acad. Sci. U.S.A.">
        <title>Crystal structure of a disulfide-linked 'trefoil' motif found in a large family of putative growth factors.</title>
        <authorList>
            <person name="De A."/>
            <person name="Brown D."/>
            <person name="Gorman M."/>
            <person name="Carr M."/>
            <person name="Sanderson M.R."/>
            <person name="Freemont P.S."/>
        </authorList>
    </citation>
    <scope>X-RAY CRYSTALLOGRAPHY (2.6 ANGSTROMS)</scope>
</reference>
<reference key="5">
    <citation type="journal article" date="1992" name="Proteins">
        <title>Pancreatic spasmolytic polypeptide: crystallization, circular dichroism analysis, and preliminary X-ray diffraction studies.</title>
        <authorList>
            <person name="Gajhede M."/>
            <person name="Thim L."/>
            <person name="Joergensen K.H."/>
            <person name="Melberg S.G."/>
        </authorList>
    </citation>
    <scope>X-RAY CRYSTALLOGRAPHY (2.7 ANGSTROMS)</scope>
</reference>
<reference key="6">
    <citation type="journal article" date="1993" name="Structure">
        <title>Pancreatic spasmolytic polypeptide: first three-dimensional structure of a member of the mammalian trefoil family of peptides.</title>
        <authorList>
            <person name="Gajhede M."/>
            <person name="Petersen T.N."/>
            <person name="Henriksen A."/>
            <person name="Petersen J.F.W."/>
            <person name="Dauter Z."/>
            <person name="Wilson K.S."/>
            <person name="Thim L."/>
        </authorList>
    </citation>
    <scope>X-RAY CRYSTALLOGRAPHY (2.5 ANGSTROMS)</scope>
    <source>
        <tissue>Pancreas</tissue>
    </source>
</reference>
<reference key="7">
    <citation type="journal article" date="1996" name="Acta Crystallogr. D">
        <title>Structure of porcine pancreatic spasmolytic polypeptide at 1.95-A resolution.</title>
        <authorList>
            <person name="Petersen T.N."/>
            <person name="Henriksen A."/>
            <person name="Gajhede M."/>
        </authorList>
    </citation>
    <scope>X-RAY CRYSTALLOGRAPHY (1.95 ANGSTROMS)</scope>
    <source>
        <tissue>Pancreas</tissue>
    </source>
</reference>
<reference key="8">
    <citation type="journal article" date="1992" name="Biochemistry">
        <title>1H NMR-based determination of the secondary structure of porcine pancreatic spasmolytic polypeptide: one of a new family of 'trefoil' motif containing cell growth factors.</title>
        <authorList>
            <person name="Carr M.D."/>
        </authorList>
    </citation>
    <scope>STRUCTURE BY NMR</scope>
</reference>
<reference key="9">
    <citation type="journal article" date="1994" name="Proc. Natl. Acad. Sci. U.S.A.">
        <title>Solution structure of a trefoil-motif-containing cell growth factor, porcine spasmolytic protein.</title>
        <authorList>
            <person name="Carr M.D."/>
            <person name="Bauer C.J."/>
            <person name="Gradwell M.J."/>
            <person name="Feeney J."/>
        </authorList>
    </citation>
    <scope>STRUCTURE BY NMR</scope>
</reference>
<accession>P01359</accession>
<gene>
    <name type="primary">TFF2</name>
    <name type="synonym">SML1</name>
</gene>